<protein>
    <recommendedName>
        <fullName evidence="1">Peptide chain release factor 1</fullName>
        <shortName evidence="1">RF-1</shortName>
    </recommendedName>
</protein>
<accession>B8FZ76</accession>
<comment type="function">
    <text evidence="1">Peptide chain release factor 1 directs the termination of translation in response to the peptide chain termination codons UAG and UAA.</text>
</comment>
<comment type="subcellular location">
    <subcellularLocation>
        <location evidence="1">Cytoplasm</location>
    </subcellularLocation>
</comment>
<comment type="PTM">
    <text evidence="1">Methylated by PrmC. Methylation increases the termination efficiency of RF1.</text>
</comment>
<comment type="similarity">
    <text evidence="1">Belongs to the prokaryotic/mitochondrial release factor family.</text>
</comment>
<sequence length="355" mass="40092">MQRKLIEIERRYDELTQLLSDPEVIGNQSEWQKYAKAQAGMTDIVEAFREYSEVVKHLEETQGLLEEKLDPEFKEMAELELEELTEKRDELEEKMRILLLPKDPNDDKNVIMEIRAGAGGEEAALFAGDLYRMYTKYAEHQGWRTELLSASYTDIGGFKEIIFLIEGQGAYSKLKFESGVHRVQRVPTTESGGRIHTSTTTVAVLPEAEEVDVAINPNDLRIDIFCSSGPGGQSVNTTQSAVRITHVPTGTVVSCQDEKSQLKNKEKALRVLRARLLERAQEEAMGELASERRSQVGTGDRSERIRTYNFPQGRVTDHRIGLTLHRLDSILLGELDEVINALITTDQAERLKSEA</sequence>
<dbReference type="EMBL" id="CP001336">
    <property type="protein sequence ID" value="ACL22828.1"/>
    <property type="molecule type" value="Genomic_DNA"/>
</dbReference>
<dbReference type="RefSeq" id="WP_005815392.1">
    <property type="nucleotide sequence ID" value="NC_011830.1"/>
</dbReference>
<dbReference type="SMR" id="B8FZ76"/>
<dbReference type="KEGG" id="dhd:Dhaf_4833"/>
<dbReference type="HOGENOM" id="CLU_036856_0_1_9"/>
<dbReference type="Proteomes" id="UP000007726">
    <property type="component" value="Chromosome"/>
</dbReference>
<dbReference type="GO" id="GO:0005737">
    <property type="term" value="C:cytoplasm"/>
    <property type="evidence" value="ECO:0007669"/>
    <property type="project" value="UniProtKB-SubCell"/>
</dbReference>
<dbReference type="GO" id="GO:0016149">
    <property type="term" value="F:translation release factor activity, codon specific"/>
    <property type="evidence" value="ECO:0007669"/>
    <property type="project" value="UniProtKB-UniRule"/>
</dbReference>
<dbReference type="FunFam" id="3.30.160.20:FF:000004">
    <property type="entry name" value="Peptide chain release factor 1"/>
    <property type="match status" value="1"/>
</dbReference>
<dbReference type="FunFam" id="3.30.70.1660:FF:000002">
    <property type="entry name" value="Peptide chain release factor 1"/>
    <property type="match status" value="1"/>
</dbReference>
<dbReference type="FunFam" id="3.30.70.1660:FF:000004">
    <property type="entry name" value="Peptide chain release factor 1"/>
    <property type="match status" value="1"/>
</dbReference>
<dbReference type="Gene3D" id="3.30.160.20">
    <property type="match status" value="1"/>
</dbReference>
<dbReference type="Gene3D" id="3.30.70.1660">
    <property type="match status" value="1"/>
</dbReference>
<dbReference type="Gene3D" id="6.10.140.1950">
    <property type="match status" value="1"/>
</dbReference>
<dbReference type="HAMAP" id="MF_00093">
    <property type="entry name" value="Rel_fac_1"/>
    <property type="match status" value="1"/>
</dbReference>
<dbReference type="InterPro" id="IPR005139">
    <property type="entry name" value="PCRF"/>
</dbReference>
<dbReference type="InterPro" id="IPR000352">
    <property type="entry name" value="Pep_chain_release_fac_I"/>
</dbReference>
<dbReference type="InterPro" id="IPR045853">
    <property type="entry name" value="Pep_chain_release_fac_I_sf"/>
</dbReference>
<dbReference type="InterPro" id="IPR050057">
    <property type="entry name" value="Prokaryotic/Mito_RF"/>
</dbReference>
<dbReference type="InterPro" id="IPR004373">
    <property type="entry name" value="RF-1"/>
</dbReference>
<dbReference type="NCBIfam" id="TIGR00019">
    <property type="entry name" value="prfA"/>
    <property type="match status" value="1"/>
</dbReference>
<dbReference type="NCBIfam" id="NF001859">
    <property type="entry name" value="PRK00591.1"/>
    <property type="match status" value="1"/>
</dbReference>
<dbReference type="PANTHER" id="PTHR43804">
    <property type="entry name" value="LD18447P"/>
    <property type="match status" value="1"/>
</dbReference>
<dbReference type="PANTHER" id="PTHR43804:SF7">
    <property type="entry name" value="LD18447P"/>
    <property type="match status" value="1"/>
</dbReference>
<dbReference type="Pfam" id="PF03462">
    <property type="entry name" value="PCRF"/>
    <property type="match status" value="1"/>
</dbReference>
<dbReference type="Pfam" id="PF00472">
    <property type="entry name" value="RF-1"/>
    <property type="match status" value="1"/>
</dbReference>
<dbReference type="SMART" id="SM00937">
    <property type="entry name" value="PCRF"/>
    <property type="match status" value="1"/>
</dbReference>
<dbReference type="SUPFAM" id="SSF75620">
    <property type="entry name" value="Release factor"/>
    <property type="match status" value="1"/>
</dbReference>
<reference key="1">
    <citation type="journal article" date="2012" name="BMC Microbiol.">
        <title>Genome sequence of Desulfitobacterium hafniense DCB-2, a Gram-positive anaerobe capable of dehalogenation and metal reduction.</title>
        <authorList>
            <person name="Kim S.H."/>
            <person name="Harzman C."/>
            <person name="Davis J.K."/>
            <person name="Hutcheson R."/>
            <person name="Broderick J.B."/>
            <person name="Marsh T.L."/>
            <person name="Tiedje J.M."/>
        </authorList>
    </citation>
    <scope>NUCLEOTIDE SEQUENCE [LARGE SCALE GENOMIC DNA]</scope>
    <source>
        <strain>DSM 10664 / DCB-2</strain>
    </source>
</reference>
<name>RF1_DESHD</name>
<evidence type="ECO:0000255" key="1">
    <source>
        <dbReference type="HAMAP-Rule" id="MF_00093"/>
    </source>
</evidence>
<proteinExistence type="inferred from homology"/>
<feature type="chain" id="PRO_1000193485" description="Peptide chain release factor 1">
    <location>
        <begin position="1"/>
        <end position="355"/>
    </location>
</feature>
<feature type="modified residue" description="N5-methylglutamine" evidence="1">
    <location>
        <position position="233"/>
    </location>
</feature>
<gene>
    <name evidence="1" type="primary">prfA</name>
    <name type="ordered locus">Dhaf_4833</name>
</gene>
<organism>
    <name type="scientific">Desulfitobacterium hafniense (strain DSM 10664 / DCB-2)</name>
    <dbReference type="NCBI Taxonomy" id="272564"/>
    <lineage>
        <taxon>Bacteria</taxon>
        <taxon>Bacillati</taxon>
        <taxon>Bacillota</taxon>
        <taxon>Clostridia</taxon>
        <taxon>Eubacteriales</taxon>
        <taxon>Desulfitobacteriaceae</taxon>
        <taxon>Desulfitobacterium</taxon>
    </lineage>
</organism>
<keyword id="KW-0963">Cytoplasm</keyword>
<keyword id="KW-0488">Methylation</keyword>
<keyword id="KW-0648">Protein biosynthesis</keyword>